<comment type="function">
    <text evidence="2 3">Involved in the production of glucuronosylated anthocyanins that are the origin of the red coloration of flowers. Can use cyanidin 3-O-6''-O-malonylglucoside, cyanidin 3-O-glucoside and delphinidin 3-O-glucosideas substrates, but not pelargonidin 3-O-glucoside, cyanidin 3-O-3'',6''-O-dimalonylglucoside, pelargonidin 3,5-O-diglucoside, pelargonidin 3-O-6''-O-malonylglucoside-5-O-glucoside, quercetin 3-O-glucoside, quercetin 3-O-6''-O-malonylglucoside, daidzin, genistin,7-O-6''-O-malonylglucosides of daidzein and genistein, cyanidin, quercetin, daidzein, genistein p-Nitrophenyl beta-D-glucopyranoside, beta-estradiol, 17alpha-estradiol, 1-naphthol, 2-naphthol, 4-methylumbelliferone, and p-nitrophenol. Highly specific for UDP-glucuronate (UDP-GlcUA). Arg-25 is decisive with respect to UDP-sugar specificity.</text>
</comment>
<comment type="catalytic activity">
    <reaction evidence="2">
        <text>cyanidin 3-O-beta-D-glucoside + UDP-alpha-D-glucuronate = cyanidin 3-O-(2-O-beta-D-glucuronosyl)-beta-D-glucoside + UDP + H(+)</text>
        <dbReference type="Rhea" id="RHEA:28258"/>
        <dbReference type="ChEBI" id="CHEBI:15378"/>
        <dbReference type="ChEBI" id="CHEBI:58052"/>
        <dbReference type="ChEBI" id="CHEBI:58223"/>
        <dbReference type="ChEBI" id="CHEBI:77824"/>
        <dbReference type="ChEBI" id="CHEBI:77857"/>
        <dbReference type="EC" id="2.4.1.254"/>
    </reaction>
</comment>
<comment type="activity regulation">
    <text evidence="2">Inhibited by copper, mercury, UDP, UTP and partially by calcium, cadmium, iron and UMP. Not affected by cobalt, magnesium, manganese, zinc, nickel, tin, uridine, sadium malonate and glucose.</text>
</comment>
<comment type="biophysicochemical properties">
    <kinetics>
        <KM evidence="2 3">19 uM for cyanidin 3-O-6''-O-malonylglucoside</KM>
        <KM evidence="2 3">101 uM for UDP-glucuronate</KM>
        <KM evidence="2 3">85 uM for cyanidin 3-O-glucoside</KM>
        <KM evidence="2 3">730 uM for UDP-glucose</KM>
    </kinetics>
    <phDependence>
        <text evidence="2 3">Optimum pH is 8.0.</text>
    </phDependence>
    <temperatureDependence>
        <text evidence="2 3">Optimum temperature is 35 degrees Celsius.</text>
    </temperatureDependence>
</comment>
<comment type="subunit">
    <text evidence="2">Monomer.</text>
</comment>
<comment type="subcellular location">
    <subcellularLocation>
        <location evidence="4">Cytoplasm</location>
    </subcellularLocation>
</comment>
<comment type="tissue specificity">
    <text evidence="2">Expressed in petals. Not detected in sepals, stems, leaves, tubular corollas and white petals.</text>
</comment>
<comment type="developmental stage">
    <text evidence="2">Peak of expression at stage 4 of flower development.</text>
</comment>
<comment type="similarity">
    <text evidence="4">Belongs to the UDP-glycosyltransferase family.</text>
</comment>
<protein>
    <recommendedName>
        <fullName>Cyanidin-3-O-glucoside 2-O-glucuronosyltransferase</fullName>
        <shortName>BpUGAT</shortName>
        <ecNumber>2.4.1.254</ecNumber>
    </recommendedName>
    <alternativeName>
        <fullName>UDP-glucuronic acid:anthocyanin glucuronosyltransferase</fullName>
    </alternativeName>
</protein>
<evidence type="ECO:0000250" key="1">
    <source>
        <dbReference type="UniProtKB" id="Q9M156"/>
    </source>
</evidence>
<evidence type="ECO:0000269" key="2">
    <source>
    </source>
</evidence>
<evidence type="ECO:0000269" key="3">
    <source>
    </source>
</evidence>
<evidence type="ECO:0000305" key="4"/>
<keyword id="KW-0963">Cytoplasm</keyword>
<keyword id="KW-0903">Direct protein sequencing</keyword>
<keyword id="KW-0328">Glycosyltransferase</keyword>
<keyword id="KW-0808">Transferase</keyword>
<sequence>MDSKIDSKTFRVVMLPWLAYSHISRFLVFAKRLTNHNFHIYICSSQTNMQYLKNNLTSQYSKSIQLIELNLPSSSELPLQYHTTHGLPPHLTKTLSDDYQKSGPDFETILIKLNPHLVIYDFNQLWAPEVASTLHIPSIQLLSGCVALYALDAHLYTKPLDENLAKFPFPEIYPKNRDIPKGGSKYIERFVDCMRRSCEIILVRSTMELEGKYIDYLSKTLGKKVLPVGPLVQEASLLQDDHIWIMKWLDKKEESSVVFVCFGSEYILSDNEIEDIAYGLELSQVSFVWAIRAKTSALNGFIDRVGDKGLVIDKWVPQANILSHSSTGGFISHCGWSSTMESIRYGVPIIAMPMQFDQPYNARLMETVGAGIEVGRDGEGRLKREEIAAVVRKVVVEDSGESIREKAKELGEIMKKNMEAEVDGIVIENLVKLCEMNN</sequence>
<name>UGAT_BELPE</name>
<feature type="chain" id="PRO_0000412107" description="Cyanidin-3-O-glucoside 2-O-glucuronosyltransferase">
    <location>
        <begin position="1"/>
        <end position="438"/>
    </location>
</feature>
<feature type="binding site" evidence="1">
    <location>
        <position position="264"/>
    </location>
    <ligand>
        <name>UDP-alpha-D-glucuronate</name>
        <dbReference type="ChEBI" id="CHEBI:58052"/>
    </ligand>
</feature>
<feature type="binding site" evidence="1">
    <location>
        <begin position="315"/>
        <end position="316"/>
    </location>
    <ligand>
        <name>UDP-alpha-D-glucuronate</name>
        <dbReference type="ChEBI" id="CHEBI:58052"/>
    </ligand>
</feature>
<feature type="binding site" evidence="1">
    <location>
        <begin position="333"/>
        <end position="341"/>
    </location>
    <ligand>
        <name>UDP-alpha-D-glucuronate</name>
        <dbReference type="ChEBI" id="CHEBI:58052"/>
    </ligand>
</feature>
<feature type="binding site" evidence="1">
    <location>
        <begin position="355"/>
        <end position="358"/>
    </location>
    <ligand>
        <name>UDP-alpha-D-glucuronate</name>
        <dbReference type="ChEBI" id="CHEBI:58052"/>
    </ligand>
</feature>
<feature type="mutagenesis site" description="Decreased activity with UDP-GlcUA as donor. Increased activity with UDP-Glc as donor." evidence="3">
    <original>R</original>
    <variation>G</variation>
    <location>
        <position position="25"/>
    </location>
</feature>
<feature type="mutagenesis site" description="Decreased activity with UDP-GlcUA as donor and decreased affinity. Increased activity with UDP-Glc as donor." evidence="3">
    <original>R</original>
    <variation>K</variation>
    <location>
        <position position="25"/>
    </location>
</feature>
<feature type="mutagenesis site" description="Decreased activity with UDP-GlcUA as donor." evidence="3">
    <original>R</original>
    <variation>P</variation>
    <location>
        <position position="25"/>
    </location>
</feature>
<feature type="mutagenesis site" description="Decreased activity with UDP-GlcUA as donor but no changes of the affinity. Increased activity with UDP-Glc as donor." evidence="3">
    <original>R</original>
    <variation>S</variation>
    <location>
        <position position="25"/>
    </location>
</feature>
<feature type="mutagenesis site" description="Strongly decreased activity." evidence="3">
    <original>N</original>
    <variation>A</variation>
    <location>
        <position position="123"/>
    </location>
</feature>
<feature type="mutagenesis site" description="Strongly decreased activity." evidence="3">
    <original>L</original>
    <variation>A</variation>
    <location>
        <position position="148"/>
    </location>
</feature>
<feature type="mutagenesis site" description="Loss of activity." evidence="3">
    <original>D</original>
    <variation>A</variation>
    <location>
        <position position="152"/>
    </location>
</feature>
<feature type="mutagenesis site" description="Strongly decreased activity." evidence="3">
    <original>P</original>
    <variation>G</variation>
    <location>
        <position position="174"/>
    </location>
</feature>
<feature type="mutagenesis site" description="Strongly decreased activity." evidence="3">
    <original>I</original>
    <variation>A</variation>
    <variation>S</variation>
    <location>
        <position position="187"/>
    </location>
</feature>
<gene>
    <name type="primary">UGAT</name>
    <name type="synonym">UGT94B1</name>
</gene>
<proteinExistence type="evidence at protein level"/>
<reference key="1">
    <citation type="journal article" date="2005" name="J. Biol. Chem.">
        <title>UDP-glucuronic acid:anthocyanin glucuronosyltransferase from red daisy (Bellis perennis) flowers. Enzymology and phylogenetics of a novel glucuronosyltransferase involved in flower pigment biosynthesis.</title>
        <authorList>
            <person name="Sawada S."/>
            <person name="Suzuki H."/>
            <person name="Ichimaida F."/>
            <person name="Yamaguchi M.A."/>
            <person name="Iwashita T."/>
            <person name="Fukui Y."/>
            <person name="Hemmi H."/>
            <person name="Nishino T."/>
            <person name="Nakayama T."/>
        </authorList>
    </citation>
    <scope>NUCLEOTIDE SEQUENCE [MRNA]</scope>
    <scope>PROTEIN SEQUENCE OF 102-112; 384-393 AND 417-426</scope>
    <scope>FUNCTION</scope>
    <scope>CATALYTIC ACTIVITY</scope>
    <scope>BIOPHYSICOCHEMICAL PROPERTIES</scope>
    <scope>ACTIVITY REGULATION</scope>
    <scope>SUBUNIT</scope>
    <scope>TISSUE SPECIFICITY</scope>
    <scope>DEVELOPMENTAL STAGE</scope>
</reference>
<reference key="2">
    <citation type="journal article" date="2008" name="Plant Physiol.">
        <title>Catalytic key amino acids and UDP-sugar donor specificity of a plant glucuronosyltransferase, UGT94B1: molecular modeling substantiated by site-specific mutagenesis and biochemical analyses.</title>
        <authorList>
            <person name="Osmani S.A."/>
            <person name="Bak S."/>
            <person name="Imberty A."/>
            <person name="Olsen C.E."/>
            <person name="Moeller B.L."/>
        </authorList>
    </citation>
    <scope>FUNCTION</scope>
    <scope>3D-STRUCTURE MODELING</scope>
    <scope>BIOPHYSICOCHEMICAL PROPERTIES</scope>
    <scope>MUTAGENESIS OF ARG-25; ASN-123; LEU-148; ASP-152; PRO-174 AND ILE-187</scope>
</reference>
<organism>
    <name type="scientific">Bellis perennis</name>
    <name type="common">English daisy</name>
    <dbReference type="NCBI Taxonomy" id="41492"/>
    <lineage>
        <taxon>Eukaryota</taxon>
        <taxon>Viridiplantae</taxon>
        <taxon>Streptophyta</taxon>
        <taxon>Embryophyta</taxon>
        <taxon>Tracheophyta</taxon>
        <taxon>Spermatophyta</taxon>
        <taxon>Magnoliopsida</taxon>
        <taxon>eudicotyledons</taxon>
        <taxon>Gunneridae</taxon>
        <taxon>Pentapetalae</taxon>
        <taxon>asterids</taxon>
        <taxon>campanulids</taxon>
        <taxon>Asterales</taxon>
        <taxon>Asteraceae</taxon>
        <taxon>Asteroideae</taxon>
        <taxon>Astereae</taxon>
        <taxon>South American lineages</taxon>
        <taxon>Bellidinae</taxon>
        <taxon>Bellis</taxon>
    </lineage>
</organism>
<dbReference type="EC" id="2.4.1.254"/>
<dbReference type="EMBL" id="AB190262">
    <property type="protein sequence ID" value="BAD77944.1"/>
    <property type="molecule type" value="mRNA"/>
</dbReference>
<dbReference type="SMR" id="Q5NTH0"/>
<dbReference type="CAZy" id="GT1">
    <property type="family name" value="Glycosyltransferase Family 1"/>
</dbReference>
<dbReference type="KEGG" id="ag:BAD77944"/>
<dbReference type="BioCyc" id="MetaCyc:MONOMER-15934"/>
<dbReference type="BRENDA" id="2.4.1.254">
    <property type="organism ID" value="11567"/>
</dbReference>
<dbReference type="SABIO-RK" id="Q5NTH0"/>
<dbReference type="GO" id="GO:0005737">
    <property type="term" value="C:cytoplasm"/>
    <property type="evidence" value="ECO:0007669"/>
    <property type="project" value="UniProtKB-SubCell"/>
</dbReference>
<dbReference type="GO" id="GO:0102160">
    <property type="term" value="F:cyanidin 3-O-glucoside 2-O-glucuronosyltransferase activity"/>
    <property type="evidence" value="ECO:0007669"/>
    <property type="project" value="UniProtKB-EC"/>
</dbReference>
<dbReference type="GO" id="GO:0008194">
    <property type="term" value="F:UDP-glycosyltransferase activity"/>
    <property type="evidence" value="ECO:0007669"/>
    <property type="project" value="InterPro"/>
</dbReference>
<dbReference type="GO" id="GO:1901137">
    <property type="term" value="P:carbohydrate derivative biosynthetic process"/>
    <property type="evidence" value="ECO:0007669"/>
    <property type="project" value="UniProtKB-ARBA"/>
</dbReference>
<dbReference type="CDD" id="cd03784">
    <property type="entry name" value="GT1_Gtf-like"/>
    <property type="match status" value="1"/>
</dbReference>
<dbReference type="FunFam" id="3.40.50.2000:FF:000060">
    <property type="entry name" value="Glycosyltransferase"/>
    <property type="match status" value="1"/>
</dbReference>
<dbReference type="Gene3D" id="3.40.50.2000">
    <property type="entry name" value="Glycogen Phosphorylase B"/>
    <property type="match status" value="2"/>
</dbReference>
<dbReference type="InterPro" id="IPR002213">
    <property type="entry name" value="UDP_glucos_trans"/>
</dbReference>
<dbReference type="InterPro" id="IPR035595">
    <property type="entry name" value="UDP_glycos_trans_CS"/>
</dbReference>
<dbReference type="PANTHER" id="PTHR48044">
    <property type="entry name" value="GLYCOSYLTRANSFERASE"/>
    <property type="match status" value="1"/>
</dbReference>
<dbReference type="PANTHER" id="PTHR48044:SF39">
    <property type="entry name" value="GLYCOSYLTRANSFERASE"/>
    <property type="match status" value="1"/>
</dbReference>
<dbReference type="Pfam" id="PF00201">
    <property type="entry name" value="UDPGT"/>
    <property type="match status" value="1"/>
</dbReference>
<dbReference type="SUPFAM" id="SSF53756">
    <property type="entry name" value="UDP-Glycosyltransferase/glycogen phosphorylase"/>
    <property type="match status" value="1"/>
</dbReference>
<dbReference type="PROSITE" id="PS00375">
    <property type="entry name" value="UDPGT"/>
    <property type="match status" value="1"/>
</dbReference>
<accession>Q5NTH0</accession>